<keyword id="KW-0997">Cell inner membrane</keyword>
<keyword id="KW-1003">Cell membrane</keyword>
<keyword id="KW-0472">Membrane</keyword>
<keyword id="KW-0653">Protein transport</keyword>
<keyword id="KW-1185">Reference proteome</keyword>
<keyword id="KW-0811">Translocation</keyword>
<keyword id="KW-0812">Transmembrane</keyword>
<keyword id="KW-1133">Transmembrane helix</keyword>
<keyword id="KW-0813">Transport</keyword>
<proteinExistence type="inferred from homology"/>
<organism>
    <name type="scientific">Psychromonas ingrahamii (strain DSM 17664 / CCUG 51855 / 37)</name>
    <dbReference type="NCBI Taxonomy" id="357804"/>
    <lineage>
        <taxon>Bacteria</taxon>
        <taxon>Pseudomonadati</taxon>
        <taxon>Pseudomonadota</taxon>
        <taxon>Gammaproteobacteria</taxon>
        <taxon>Alteromonadales</taxon>
        <taxon>Psychromonadaceae</taxon>
        <taxon>Psychromonas</taxon>
    </lineage>
</organism>
<dbReference type="EMBL" id="CP000510">
    <property type="protein sequence ID" value="ABM02186.1"/>
    <property type="molecule type" value="Genomic_DNA"/>
</dbReference>
<dbReference type="RefSeq" id="WP_011768745.1">
    <property type="nucleotide sequence ID" value="NC_008709.1"/>
</dbReference>
<dbReference type="SMR" id="A1SRS1"/>
<dbReference type="STRING" id="357804.Ping_0320"/>
<dbReference type="KEGG" id="pin:Ping_0320"/>
<dbReference type="eggNOG" id="COG1826">
    <property type="taxonomic scope" value="Bacteria"/>
</dbReference>
<dbReference type="HOGENOM" id="CLU_086034_5_1_6"/>
<dbReference type="OrthoDB" id="7066617at2"/>
<dbReference type="Proteomes" id="UP000000639">
    <property type="component" value="Chromosome"/>
</dbReference>
<dbReference type="GO" id="GO:0033281">
    <property type="term" value="C:TAT protein transport complex"/>
    <property type="evidence" value="ECO:0007669"/>
    <property type="project" value="UniProtKB-UniRule"/>
</dbReference>
<dbReference type="GO" id="GO:0008320">
    <property type="term" value="F:protein transmembrane transporter activity"/>
    <property type="evidence" value="ECO:0007669"/>
    <property type="project" value="UniProtKB-UniRule"/>
</dbReference>
<dbReference type="GO" id="GO:0043953">
    <property type="term" value="P:protein transport by the Tat complex"/>
    <property type="evidence" value="ECO:0007669"/>
    <property type="project" value="UniProtKB-UniRule"/>
</dbReference>
<dbReference type="Gene3D" id="1.20.5.3310">
    <property type="match status" value="1"/>
</dbReference>
<dbReference type="HAMAP" id="MF_00236">
    <property type="entry name" value="TatA_E"/>
    <property type="match status" value="1"/>
</dbReference>
<dbReference type="InterPro" id="IPR003369">
    <property type="entry name" value="TatA/B/E"/>
</dbReference>
<dbReference type="InterPro" id="IPR006312">
    <property type="entry name" value="TatA/E"/>
</dbReference>
<dbReference type="NCBIfam" id="TIGR01411">
    <property type="entry name" value="tatAE"/>
    <property type="match status" value="1"/>
</dbReference>
<dbReference type="PANTHER" id="PTHR42982">
    <property type="entry name" value="SEC-INDEPENDENT PROTEIN TRANSLOCASE PROTEIN TATA"/>
    <property type="match status" value="1"/>
</dbReference>
<dbReference type="PANTHER" id="PTHR42982:SF1">
    <property type="entry name" value="SEC-INDEPENDENT PROTEIN TRANSLOCASE PROTEIN TATA"/>
    <property type="match status" value="1"/>
</dbReference>
<dbReference type="Pfam" id="PF02416">
    <property type="entry name" value="TatA_B_E"/>
    <property type="match status" value="1"/>
</dbReference>
<feature type="chain" id="PRO_1000044425" description="Sec-independent protein translocase protein TatA">
    <location>
        <begin position="1"/>
        <end position="88"/>
    </location>
</feature>
<feature type="transmembrane region" description="Helical" evidence="1">
    <location>
        <begin position="1"/>
        <end position="21"/>
    </location>
</feature>
<feature type="region of interest" description="Disordered" evidence="2">
    <location>
        <begin position="46"/>
        <end position="88"/>
    </location>
</feature>
<protein>
    <recommendedName>
        <fullName evidence="1">Sec-independent protein translocase protein TatA</fullName>
    </recommendedName>
</protein>
<evidence type="ECO:0000255" key="1">
    <source>
        <dbReference type="HAMAP-Rule" id="MF_00236"/>
    </source>
</evidence>
<evidence type="ECO:0000256" key="2">
    <source>
        <dbReference type="SAM" id="MobiDB-lite"/>
    </source>
</evidence>
<comment type="function">
    <text evidence="1">Part of the twin-arginine translocation (Tat) system that transports large folded proteins containing a characteristic twin-arginine motif in their signal peptide across membranes. TatA could form the protein-conducting channel of the Tat system.</text>
</comment>
<comment type="subunit">
    <text evidence="1">The Tat system comprises two distinct complexes: a TatABC complex, containing multiple copies of TatA, TatB and TatC subunits, and a separate TatA complex, containing only TatA subunits. Substrates initially bind to the TatABC complex, which probably triggers association of the separate TatA complex to form the active translocon.</text>
</comment>
<comment type="subcellular location">
    <subcellularLocation>
        <location evidence="1">Cell inner membrane</location>
        <topology evidence="1">Single-pass membrane protein</topology>
    </subcellularLocation>
</comment>
<comment type="similarity">
    <text evidence="1">Belongs to the TatA/E family.</text>
</comment>
<gene>
    <name evidence="1" type="primary">tatA</name>
    <name type="ordered locus">Ping_0320</name>
</gene>
<name>TATA_PSYIN</name>
<accession>A1SRS1</accession>
<sequence length="88" mass="9599">MGGIGIWQLAIITVIVILLFGTKKLRGIGGDLGGAIKGFKKAIKEDNDKDSTQVDDKDSTQVDDNAKQPSNKKVEENIKEQSKEKDRA</sequence>
<reference key="1">
    <citation type="journal article" date="2008" name="BMC Genomics">
        <title>Genomics of an extreme psychrophile, Psychromonas ingrahamii.</title>
        <authorList>
            <person name="Riley M."/>
            <person name="Staley J.T."/>
            <person name="Danchin A."/>
            <person name="Wang T.Z."/>
            <person name="Brettin T.S."/>
            <person name="Hauser L.J."/>
            <person name="Land M.L."/>
            <person name="Thompson L.S."/>
        </authorList>
    </citation>
    <scope>NUCLEOTIDE SEQUENCE [LARGE SCALE GENOMIC DNA]</scope>
    <source>
        <strain>DSM 17664 / CCUG 51855 / 37</strain>
    </source>
</reference>